<feature type="chain" id="PRO_0000449250" description="PH and SEC7 domain-containing protein" evidence="8">
    <location>
        <begin position="1"/>
        <end position="1601"/>
    </location>
</feature>
<feature type="domain" description="PDZ" evidence="1">
    <location>
        <begin position="6"/>
        <end position="88"/>
    </location>
</feature>
<feature type="domain" description="SEC7" evidence="3">
    <location>
        <begin position="1125"/>
        <end position="1291"/>
    </location>
</feature>
<feature type="domain" description="PH" evidence="2">
    <location>
        <begin position="1332"/>
        <end position="1445"/>
    </location>
</feature>
<feature type="region of interest" description="Mediates regulation of axon branching and microtubule organization" evidence="6">
    <location>
        <begin position="1"/>
        <end position="340"/>
    </location>
</feature>
<feature type="region of interest" description="Disordered" evidence="4">
    <location>
        <begin position="113"/>
        <end position="192"/>
    </location>
</feature>
<feature type="region of interest" description="Disordered" evidence="4">
    <location>
        <begin position="211"/>
        <end position="322"/>
    </location>
</feature>
<feature type="region of interest" description="Disordered" evidence="4">
    <location>
        <begin position="339"/>
        <end position="440"/>
    </location>
</feature>
<feature type="region of interest" description="Disordered" evidence="4">
    <location>
        <begin position="459"/>
        <end position="657"/>
    </location>
</feature>
<feature type="region of interest" description="Disordered" evidence="4">
    <location>
        <begin position="737"/>
        <end position="780"/>
    </location>
</feature>
<feature type="region of interest" description="Disordered" evidence="4">
    <location>
        <begin position="872"/>
        <end position="965"/>
    </location>
</feature>
<feature type="region of interest" description="Mediates association to the membrane and rescricts the microtubule-inhibiting activity to the cell cortex" evidence="6">
    <location>
        <begin position="894"/>
        <end position="1601"/>
    </location>
</feature>
<feature type="region of interest" description="Disordered" evidence="4">
    <location>
        <begin position="1040"/>
        <end position="1126"/>
    </location>
</feature>
<feature type="region of interest" description="Disordered" evidence="4">
    <location>
        <begin position="1544"/>
        <end position="1601"/>
    </location>
</feature>
<feature type="short sequence motif" description="Microtubule elimination domain (MTED); Binds tubulin and blocks microtubule polymerization" evidence="6">
    <location>
        <begin position="323"/>
        <end position="340"/>
    </location>
</feature>
<feature type="compositionally biased region" description="Polar residues" evidence="4">
    <location>
        <begin position="118"/>
        <end position="128"/>
    </location>
</feature>
<feature type="compositionally biased region" description="Low complexity" evidence="4">
    <location>
        <begin position="166"/>
        <end position="191"/>
    </location>
</feature>
<feature type="compositionally biased region" description="Polar residues" evidence="4">
    <location>
        <begin position="283"/>
        <end position="297"/>
    </location>
</feature>
<feature type="compositionally biased region" description="Basic and acidic residues" evidence="4">
    <location>
        <begin position="300"/>
        <end position="311"/>
    </location>
</feature>
<feature type="compositionally biased region" description="Polar residues" evidence="4">
    <location>
        <begin position="339"/>
        <end position="348"/>
    </location>
</feature>
<feature type="compositionally biased region" description="Basic and acidic residues" evidence="4">
    <location>
        <begin position="353"/>
        <end position="362"/>
    </location>
</feature>
<feature type="compositionally biased region" description="Low complexity" evidence="4">
    <location>
        <begin position="382"/>
        <end position="399"/>
    </location>
</feature>
<feature type="compositionally biased region" description="Low complexity" evidence="4">
    <location>
        <begin position="409"/>
        <end position="424"/>
    </location>
</feature>
<feature type="compositionally biased region" description="Low complexity" evidence="4">
    <location>
        <begin position="468"/>
        <end position="487"/>
    </location>
</feature>
<feature type="compositionally biased region" description="Acidic residues" evidence="4">
    <location>
        <begin position="488"/>
        <end position="505"/>
    </location>
</feature>
<feature type="compositionally biased region" description="Polar residues" evidence="4">
    <location>
        <begin position="510"/>
        <end position="519"/>
    </location>
</feature>
<feature type="compositionally biased region" description="Acidic residues" evidence="4">
    <location>
        <begin position="526"/>
        <end position="557"/>
    </location>
</feature>
<feature type="compositionally biased region" description="Polar residues" evidence="4">
    <location>
        <begin position="558"/>
        <end position="567"/>
    </location>
</feature>
<feature type="compositionally biased region" description="Polar residues" evidence="4">
    <location>
        <begin position="617"/>
        <end position="630"/>
    </location>
</feature>
<feature type="compositionally biased region" description="Low complexity" evidence="4">
    <location>
        <begin position="640"/>
        <end position="657"/>
    </location>
</feature>
<feature type="compositionally biased region" description="Polar residues" evidence="4">
    <location>
        <begin position="737"/>
        <end position="747"/>
    </location>
</feature>
<feature type="compositionally biased region" description="Low complexity" evidence="4">
    <location>
        <begin position="752"/>
        <end position="780"/>
    </location>
</feature>
<feature type="compositionally biased region" description="Low complexity" evidence="4">
    <location>
        <begin position="872"/>
        <end position="942"/>
    </location>
</feature>
<feature type="compositionally biased region" description="Low complexity" evidence="4">
    <location>
        <begin position="949"/>
        <end position="965"/>
    </location>
</feature>
<feature type="compositionally biased region" description="Low complexity" evidence="4">
    <location>
        <begin position="1040"/>
        <end position="1052"/>
    </location>
</feature>
<feature type="compositionally biased region" description="Basic and acidic residues" evidence="4">
    <location>
        <begin position="1053"/>
        <end position="1071"/>
    </location>
</feature>
<feature type="compositionally biased region" description="Polar residues" evidence="4">
    <location>
        <begin position="1568"/>
        <end position="1579"/>
    </location>
</feature>
<feature type="splice variant" id="VSP_060537" description="In isoform C, isoform D, isoform G and isoform I." evidence="8">
    <location>
        <begin position="729"/>
        <end position="808"/>
    </location>
</feature>
<feature type="splice variant" id="VSP_060539" description="In isoform C and isoform G." evidence="8">
    <location>
        <begin position="881"/>
        <end position="1014"/>
    </location>
</feature>
<feature type="splice variant" id="VSP_060540" description="In isoform I." evidence="8">
    <original>RKEKKKK</original>
    <variation>SPPRISVSTNLAWRKIFWDSVCCGVLLCCWHYCTVLTVIP</variation>
    <location>
        <begin position="1595"/>
        <end position="1601"/>
    </location>
</feature>
<feature type="splice variant" id="VSP_060541" description="In isoform G." evidence="8">
    <original>KEKKKK</original>
    <variation>WFDVFCCCCPLWRHLIHSKSH</variation>
    <location>
        <begin position="1596"/>
        <end position="1601"/>
    </location>
</feature>
<feature type="mutagenesis site" description="Depletion of microtubule network leading to axon loss; when associated with 262-A--A-265." evidence="6">
    <original>SRIP</original>
    <variation>AAAA</variation>
    <location>
        <begin position="233"/>
        <end position="236"/>
    </location>
</feature>
<feature type="mutagenesis site" description="Depletion of microtubule network leading to axon loss; when associated with 233-A--A-236." evidence="6">
    <original>SQIP</original>
    <variation>AAAA</variation>
    <location>
        <begin position="262"/>
        <end position="265"/>
    </location>
</feature>
<feature type="sequence conflict" description="In Ref. 4; ABX00730." evidence="8" ref="4">
    <original>K</original>
    <variation>KQ</variation>
    <location>
        <position position="410"/>
    </location>
</feature>
<feature type="sequence conflict" description="In Ref. 4; ABX00730." evidence="8" ref="4">
    <original>L</original>
    <variation>V</variation>
    <location>
        <position position="444"/>
    </location>
</feature>
<feature type="sequence conflict" description="In Ref. 4; ABX00730." evidence="8" ref="4">
    <original>P</original>
    <variation>S</variation>
    <location>
        <position position="622"/>
    </location>
</feature>
<feature type="sequence conflict" description="In Ref. 3; AAM51104 and 4; ABX00730." evidence="8" ref="3 4">
    <original>T</original>
    <variation>M</variation>
    <location>
        <position position="1106"/>
    </location>
</feature>
<feature type="sequence conflict" description="In Ref. 4; ABX00730." evidence="8" ref="4">
    <original>L</original>
    <variation>V</variation>
    <location>
        <position position="1366"/>
    </location>
</feature>
<proteinExistence type="evidence at protein level"/>
<name>PSD_DROME</name>
<dbReference type="EMBL" id="AE014297">
    <property type="protein sequence ID" value="AAF56027.4"/>
    <property type="molecule type" value="Genomic_DNA"/>
</dbReference>
<dbReference type="EMBL" id="AE014297">
    <property type="protein sequence ID" value="AAO41590.3"/>
    <property type="molecule type" value="Genomic_DNA"/>
</dbReference>
<dbReference type="EMBL" id="AE014297">
    <property type="protein sequence ID" value="ABW08731.1"/>
    <property type="molecule type" value="Genomic_DNA"/>
</dbReference>
<dbReference type="EMBL" id="AE014297">
    <property type="protein sequence ID" value="ABW08732.1"/>
    <property type="molecule type" value="Genomic_DNA"/>
</dbReference>
<dbReference type="EMBL" id="AE014297">
    <property type="protein sequence ID" value="ACZ94987.2"/>
    <property type="molecule type" value="Genomic_DNA"/>
</dbReference>
<dbReference type="EMBL" id="AY119244">
    <property type="protein sequence ID" value="AAM51104.1"/>
    <property type="molecule type" value="mRNA"/>
</dbReference>
<dbReference type="EMBL" id="BT031108">
    <property type="protein sequence ID" value="ABX00730.1"/>
    <property type="molecule type" value="mRNA"/>
</dbReference>
<dbReference type="EMBL" id="BT072828">
    <property type="protein sequence ID" value="ACN62431.1"/>
    <property type="molecule type" value="mRNA"/>
</dbReference>
<dbReference type="RefSeq" id="NP_001097873.1">
    <molecule id="E1JIT7-2"/>
    <property type="nucleotide sequence ID" value="NM_001104403.2"/>
</dbReference>
<dbReference type="RefSeq" id="NP_001097874.1">
    <molecule id="E1JIT7-3"/>
    <property type="nucleotide sequence ID" value="NM_001104404.2"/>
</dbReference>
<dbReference type="RefSeq" id="NP_001163691.2">
    <molecule id="E1JIT7-1"/>
    <property type="nucleotide sequence ID" value="NM_001170220.2"/>
</dbReference>
<dbReference type="RefSeq" id="NP_732769.3">
    <molecule id="E1JIT7-4"/>
    <property type="nucleotide sequence ID" value="NM_170027.4"/>
</dbReference>
<dbReference type="RefSeq" id="NP_788718.3">
    <molecule id="E1JIT7-5"/>
    <property type="nucleotide sequence ID" value="NM_176541.3"/>
</dbReference>
<dbReference type="SMR" id="E1JIT7"/>
<dbReference type="FunCoup" id="E1JIT7">
    <property type="interactions" value="200"/>
</dbReference>
<dbReference type="STRING" id="7227.FBpp0306626"/>
<dbReference type="PaxDb" id="7227-FBpp0112308"/>
<dbReference type="EnsemblMetazoa" id="FBtr0113395">
    <molecule id="E1JIT7-2"/>
    <property type="protein sequence ID" value="FBpp0112307"/>
    <property type="gene ID" value="FBgn0051158"/>
</dbReference>
<dbReference type="EnsemblMetazoa" id="FBtr0113396">
    <molecule id="E1JIT7-3"/>
    <property type="protein sequence ID" value="FBpp0112308"/>
    <property type="gene ID" value="FBgn0051158"/>
</dbReference>
<dbReference type="EnsemblMetazoa" id="FBtr0302187">
    <molecule id="E1JIT7-4"/>
    <property type="protein sequence ID" value="FBpp0291397"/>
    <property type="gene ID" value="FBgn0051158"/>
</dbReference>
<dbReference type="EnsemblMetazoa" id="FBtr0334559">
    <molecule id="E1JIT7-1"/>
    <property type="protein sequence ID" value="FBpp0306626"/>
    <property type="gene ID" value="FBgn0051158"/>
</dbReference>
<dbReference type="EnsemblMetazoa" id="FBtr0334560">
    <molecule id="E1JIT7-5"/>
    <property type="protein sequence ID" value="FBpp0306627"/>
    <property type="gene ID" value="FBgn0051158"/>
</dbReference>
<dbReference type="GeneID" id="42665"/>
<dbReference type="KEGG" id="dme:Dmel_CG31158"/>
<dbReference type="UCSC" id="CG31158-RC">
    <property type="organism name" value="d. melanogaster"/>
</dbReference>
<dbReference type="UCSC" id="CG31158-RD">
    <property type="organism name" value="d. melanogaster"/>
</dbReference>
<dbReference type="AGR" id="FB:FBgn0051158"/>
<dbReference type="CTD" id="42665"/>
<dbReference type="FlyBase" id="FBgn0051158">
    <property type="gene designation" value="Efa6"/>
</dbReference>
<dbReference type="VEuPathDB" id="VectorBase:FBgn0051158"/>
<dbReference type="eggNOG" id="KOG0932">
    <property type="taxonomic scope" value="Eukaryota"/>
</dbReference>
<dbReference type="GeneTree" id="ENSGT00940000155061"/>
<dbReference type="HOGENOM" id="CLU_005163_1_0_1"/>
<dbReference type="InParanoid" id="E1JIT7"/>
<dbReference type="OMA" id="MCEELEQ"/>
<dbReference type="OrthoDB" id="2157641at2759"/>
<dbReference type="SignaLink" id="E1JIT7"/>
<dbReference type="BioGRID-ORCS" id="42665">
    <property type="hits" value="0 hits in 3 CRISPR screens"/>
</dbReference>
<dbReference type="ChiTaRS" id="Efa6">
    <property type="organism name" value="fly"/>
</dbReference>
<dbReference type="GenomeRNAi" id="42665"/>
<dbReference type="PRO" id="PR:E1JIT7"/>
<dbReference type="Proteomes" id="UP000000803">
    <property type="component" value="Chromosome 3R"/>
</dbReference>
<dbReference type="Bgee" id="FBgn0051158">
    <property type="expression patterns" value="Expressed in spermatocyte cyst cell (Drosophila) in testis and 269 other cell types or tissues"/>
</dbReference>
<dbReference type="ExpressionAtlas" id="E1JIT7">
    <property type="expression patterns" value="baseline and differential"/>
</dbReference>
<dbReference type="GO" id="GO:0030424">
    <property type="term" value="C:axon"/>
    <property type="evidence" value="ECO:0000314"/>
    <property type="project" value="UniProtKB"/>
</dbReference>
<dbReference type="GO" id="GO:0044297">
    <property type="term" value="C:cell body"/>
    <property type="evidence" value="ECO:0000314"/>
    <property type="project" value="UniProtKB"/>
</dbReference>
<dbReference type="GO" id="GO:0005938">
    <property type="term" value="C:cell cortex"/>
    <property type="evidence" value="ECO:0000314"/>
    <property type="project" value="UniProtKB"/>
</dbReference>
<dbReference type="GO" id="GO:0000139">
    <property type="term" value="C:Golgi membrane"/>
    <property type="evidence" value="ECO:0000250"/>
    <property type="project" value="FlyBase"/>
</dbReference>
<dbReference type="GO" id="GO:0005886">
    <property type="term" value="C:plasma membrane"/>
    <property type="evidence" value="ECO:0007669"/>
    <property type="project" value="UniProtKB-SubCell"/>
</dbReference>
<dbReference type="GO" id="GO:0005085">
    <property type="term" value="F:guanyl-nucleotide exchange factor activity"/>
    <property type="evidence" value="ECO:0000250"/>
    <property type="project" value="FlyBase"/>
</dbReference>
<dbReference type="GO" id="GO:0008017">
    <property type="term" value="F:microtubule binding"/>
    <property type="evidence" value="ECO:0000314"/>
    <property type="project" value="UniProtKB"/>
</dbReference>
<dbReference type="GO" id="GO:0005543">
    <property type="term" value="F:phospholipid binding"/>
    <property type="evidence" value="ECO:0007669"/>
    <property type="project" value="InterPro"/>
</dbReference>
<dbReference type="GO" id="GO:0035082">
    <property type="term" value="P:axoneme assembly"/>
    <property type="evidence" value="ECO:0000315"/>
    <property type="project" value="UniProtKB"/>
</dbReference>
<dbReference type="GO" id="GO:0001745">
    <property type="term" value="P:compound eye morphogenesis"/>
    <property type="evidence" value="ECO:0000316"/>
    <property type="project" value="UniProtKB"/>
</dbReference>
<dbReference type="GO" id="GO:0031115">
    <property type="term" value="P:negative regulation of microtubule polymerization"/>
    <property type="evidence" value="ECO:0000315"/>
    <property type="project" value="UniProtKB"/>
</dbReference>
<dbReference type="GO" id="GO:0032014">
    <property type="term" value="P:positive regulation of ARF protein signal transduction"/>
    <property type="evidence" value="ECO:0000250"/>
    <property type="project" value="FlyBase"/>
</dbReference>
<dbReference type="GO" id="GO:0097305">
    <property type="term" value="P:response to alcohol"/>
    <property type="evidence" value="ECO:0000316"/>
    <property type="project" value="UniProtKB"/>
</dbReference>
<dbReference type="CDD" id="cd00136">
    <property type="entry name" value="PDZ_canonical"/>
    <property type="match status" value="1"/>
</dbReference>
<dbReference type="CDD" id="cd13295">
    <property type="entry name" value="PH_EFA6"/>
    <property type="match status" value="1"/>
</dbReference>
<dbReference type="CDD" id="cd00171">
    <property type="entry name" value="Sec7"/>
    <property type="match status" value="1"/>
</dbReference>
<dbReference type="FunFam" id="1.10.1000.11:FF:000004">
    <property type="entry name" value="PH and SEC7 domain-containing protein 2"/>
    <property type="match status" value="1"/>
</dbReference>
<dbReference type="FunFam" id="2.30.29.30:FF:000323">
    <property type="entry name" value="Uncharacterized protein, isoform C"/>
    <property type="match status" value="1"/>
</dbReference>
<dbReference type="Gene3D" id="2.30.42.10">
    <property type="match status" value="1"/>
</dbReference>
<dbReference type="Gene3D" id="1.10.1000.11">
    <property type="entry name" value="Arf Nucleotide-binding Site Opener,domain 2"/>
    <property type="match status" value="1"/>
</dbReference>
<dbReference type="Gene3D" id="2.30.29.30">
    <property type="entry name" value="Pleckstrin-homology domain (PH domain)/Phosphotyrosine-binding domain (PTB)"/>
    <property type="match status" value="1"/>
</dbReference>
<dbReference type="InterPro" id="IPR001478">
    <property type="entry name" value="PDZ"/>
</dbReference>
<dbReference type="InterPro" id="IPR041489">
    <property type="entry name" value="PDZ_6"/>
</dbReference>
<dbReference type="InterPro" id="IPR036034">
    <property type="entry name" value="PDZ_sf"/>
</dbReference>
<dbReference type="InterPro" id="IPR011993">
    <property type="entry name" value="PH-like_dom_sf"/>
</dbReference>
<dbReference type="InterPro" id="IPR041681">
    <property type="entry name" value="PH_9"/>
</dbReference>
<dbReference type="InterPro" id="IPR001605">
    <property type="entry name" value="PH_dom-spectrin-type"/>
</dbReference>
<dbReference type="InterPro" id="IPR001849">
    <property type="entry name" value="PH_domain"/>
</dbReference>
<dbReference type="InterPro" id="IPR023394">
    <property type="entry name" value="Sec7_C_sf"/>
</dbReference>
<dbReference type="InterPro" id="IPR000904">
    <property type="entry name" value="Sec7_dom"/>
</dbReference>
<dbReference type="InterPro" id="IPR035999">
    <property type="entry name" value="Sec7_dom_sf"/>
</dbReference>
<dbReference type="PANTHER" id="PTHR10663">
    <property type="entry name" value="GUANYL-NUCLEOTIDE EXCHANGE FACTOR"/>
    <property type="match status" value="1"/>
</dbReference>
<dbReference type="PANTHER" id="PTHR10663:SF376">
    <property type="entry name" value="PH AND SEC7 DOMAIN-CONTAINING PROTEIN"/>
    <property type="match status" value="1"/>
</dbReference>
<dbReference type="Pfam" id="PF17820">
    <property type="entry name" value="PDZ_6"/>
    <property type="match status" value="1"/>
</dbReference>
<dbReference type="Pfam" id="PF15410">
    <property type="entry name" value="PH_9"/>
    <property type="match status" value="1"/>
</dbReference>
<dbReference type="Pfam" id="PF01369">
    <property type="entry name" value="Sec7"/>
    <property type="match status" value="1"/>
</dbReference>
<dbReference type="PRINTS" id="PR00683">
    <property type="entry name" value="SPECTRINPH"/>
</dbReference>
<dbReference type="SMART" id="SM00228">
    <property type="entry name" value="PDZ"/>
    <property type="match status" value="1"/>
</dbReference>
<dbReference type="SMART" id="SM00233">
    <property type="entry name" value="PH"/>
    <property type="match status" value="1"/>
</dbReference>
<dbReference type="SMART" id="SM00222">
    <property type="entry name" value="Sec7"/>
    <property type="match status" value="1"/>
</dbReference>
<dbReference type="SUPFAM" id="SSF50156">
    <property type="entry name" value="PDZ domain-like"/>
    <property type="match status" value="1"/>
</dbReference>
<dbReference type="SUPFAM" id="SSF50729">
    <property type="entry name" value="PH domain-like"/>
    <property type="match status" value="1"/>
</dbReference>
<dbReference type="SUPFAM" id="SSF48425">
    <property type="entry name" value="Sec7 domain"/>
    <property type="match status" value="1"/>
</dbReference>
<dbReference type="PROSITE" id="PS50106">
    <property type="entry name" value="PDZ"/>
    <property type="match status" value="1"/>
</dbReference>
<dbReference type="PROSITE" id="PS50003">
    <property type="entry name" value="PH_DOMAIN"/>
    <property type="match status" value="1"/>
</dbReference>
<dbReference type="PROSITE" id="PS50190">
    <property type="entry name" value="SEC7"/>
    <property type="match status" value="1"/>
</dbReference>
<keyword id="KW-0025">Alternative splicing</keyword>
<keyword id="KW-1003">Cell membrane</keyword>
<keyword id="KW-0966">Cell projection</keyword>
<keyword id="KW-0963">Cytoplasm</keyword>
<keyword id="KW-0344">Guanine-nucleotide releasing factor</keyword>
<keyword id="KW-0472">Membrane</keyword>
<keyword id="KW-1185">Reference proteome</keyword>
<accession>E1JIT7</accession>
<accession>A8JR81</accession>
<accession>A8JR82</accession>
<accession>A8WHG2</accession>
<accession>C0PUX2</accession>
<accession>E2QD55</accession>
<accession>E2QD56</accession>
<accession>Q8MRV5</accession>
<protein>
    <recommendedName>
        <fullName evidence="8">PH and SEC7 domain-containing protein</fullName>
    </recommendedName>
    <alternativeName>
        <fullName evidence="7 12">Exchange factor for ADP-ribosylation factor guanine nucleotide factor 6</fullName>
        <shortName evidence="7 12">Exchange factor for Arf 6</shortName>
    </alternativeName>
</protein>
<evidence type="ECO:0000255" key="1">
    <source>
        <dbReference type="PROSITE-ProRule" id="PRU00143"/>
    </source>
</evidence>
<evidence type="ECO:0000255" key="2">
    <source>
        <dbReference type="PROSITE-ProRule" id="PRU00145"/>
    </source>
</evidence>
<evidence type="ECO:0000255" key="3">
    <source>
        <dbReference type="PROSITE-ProRule" id="PRU00189"/>
    </source>
</evidence>
<evidence type="ECO:0000256" key="4">
    <source>
        <dbReference type="SAM" id="MobiDB-lite"/>
    </source>
</evidence>
<evidence type="ECO:0000269" key="5">
    <source>
    </source>
</evidence>
<evidence type="ECO:0000269" key="6">
    <source>
    </source>
</evidence>
<evidence type="ECO:0000303" key="7">
    <source>
    </source>
</evidence>
<evidence type="ECO:0000305" key="8"/>
<evidence type="ECO:0000312" key="9">
    <source>
        <dbReference type="EMBL" id="AAM51104.1"/>
    </source>
</evidence>
<evidence type="ECO:0000312" key="10">
    <source>
        <dbReference type="EMBL" id="ABX00730.1"/>
    </source>
</evidence>
<evidence type="ECO:0000312" key="11">
    <source>
        <dbReference type="EMBL" id="ACN62431.1"/>
    </source>
</evidence>
<evidence type="ECO:0000312" key="12">
    <source>
        <dbReference type="FlyBase" id="FBgn0051158"/>
    </source>
</evidence>
<evidence type="ECO:0000312" key="13">
    <source>
        <dbReference type="Proteomes" id="UP000000803"/>
    </source>
</evidence>
<reference evidence="13" key="1">
    <citation type="journal article" date="2000" name="Science">
        <title>The genome sequence of Drosophila melanogaster.</title>
        <authorList>
            <person name="Adams M.D."/>
            <person name="Celniker S.E."/>
            <person name="Holt R.A."/>
            <person name="Evans C.A."/>
            <person name="Gocayne J.D."/>
            <person name="Amanatides P.G."/>
            <person name="Scherer S.E."/>
            <person name="Li P.W."/>
            <person name="Hoskins R.A."/>
            <person name="Galle R.F."/>
            <person name="George R.A."/>
            <person name="Lewis S.E."/>
            <person name="Richards S."/>
            <person name="Ashburner M."/>
            <person name="Henderson S.N."/>
            <person name="Sutton G.G."/>
            <person name="Wortman J.R."/>
            <person name="Yandell M.D."/>
            <person name="Zhang Q."/>
            <person name="Chen L.X."/>
            <person name="Brandon R.C."/>
            <person name="Rogers Y.-H.C."/>
            <person name="Blazej R.G."/>
            <person name="Champe M."/>
            <person name="Pfeiffer B.D."/>
            <person name="Wan K.H."/>
            <person name="Doyle C."/>
            <person name="Baxter E.G."/>
            <person name="Helt G."/>
            <person name="Nelson C.R."/>
            <person name="Miklos G.L.G."/>
            <person name="Abril J.F."/>
            <person name="Agbayani A."/>
            <person name="An H.-J."/>
            <person name="Andrews-Pfannkoch C."/>
            <person name="Baldwin D."/>
            <person name="Ballew R.M."/>
            <person name="Basu A."/>
            <person name="Baxendale J."/>
            <person name="Bayraktaroglu L."/>
            <person name="Beasley E.M."/>
            <person name="Beeson K.Y."/>
            <person name="Benos P.V."/>
            <person name="Berman B.P."/>
            <person name="Bhandari D."/>
            <person name="Bolshakov S."/>
            <person name="Borkova D."/>
            <person name="Botchan M.R."/>
            <person name="Bouck J."/>
            <person name="Brokstein P."/>
            <person name="Brottier P."/>
            <person name="Burtis K.C."/>
            <person name="Busam D.A."/>
            <person name="Butler H."/>
            <person name="Cadieu E."/>
            <person name="Center A."/>
            <person name="Chandra I."/>
            <person name="Cherry J.M."/>
            <person name="Cawley S."/>
            <person name="Dahlke C."/>
            <person name="Davenport L.B."/>
            <person name="Davies P."/>
            <person name="de Pablos B."/>
            <person name="Delcher A."/>
            <person name="Deng Z."/>
            <person name="Mays A.D."/>
            <person name="Dew I."/>
            <person name="Dietz S.M."/>
            <person name="Dodson K."/>
            <person name="Doup L.E."/>
            <person name="Downes M."/>
            <person name="Dugan-Rocha S."/>
            <person name="Dunkov B.C."/>
            <person name="Dunn P."/>
            <person name="Durbin K.J."/>
            <person name="Evangelista C.C."/>
            <person name="Ferraz C."/>
            <person name="Ferriera S."/>
            <person name="Fleischmann W."/>
            <person name="Fosler C."/>
            <person name="Gabrielian A.E."/>
            <person name="Garg N.S."/>
            <person name="Gelbart W.M."/>
            <person name="Glasser K."/>
            <person name="Glodek A."/>
            <person name="Gong F."/>
            <person name="Gorrell J.H."/>
            <person name="Gu Z."/>
            <person name="Guan P."/>
            <person name="Harris M."/>
            <person name="Harris N.L."/>
            <person name="Harvey D.A."/>
            <person name="Heiman T.J."/>
            <person name="Hernandez J.R."/>
            <person name="Houck J."/>
            <person name="Hostin D."/>
            <person name="Houston K.A."/>
            <person name="Howland T.J."/>
            <person name="Wei M.-H."/>
            <person name="Ibegwam C."/>
            <person name="Jalali M."/>
            <person name="Kalush F."/>
            <person name="Karpen G.H."/>
            <person name="Ke Z."/>
            <person name="Kennison J.A."/>
            <person name="Ketchum K.A."/>
            <person name="Kimmel B.E."/>
            <person name="Kodira C.D."/>
            <person name="Kraft C.L."/>
            <person name="Kravitz S."/>
            <person name="Kulp D."/>
            <person name="Lai Z."/>
            <person name="Lasko P."/>
            <person name="Lei Y."/>
            <person name="Levitsky A.A."/>
            <person name="Li J.H."/>
            <person name="Li Z."/>
            <person name="Liang Y."/>
            <person name="Lin X."/>
            <person name="Liu X."/>
            <person name="Mattei B."/>
            <person name="McIntosh T.C."/>
            <person name="McLeod M.P."/>
            <person name="McPherson D."/>
            <person name="Merkulov G."/>
            <person name="Milshina N.V."/>
            <person name="Mobarry C."/>
            <person name="Morris J."/>
            <person name="Moshrefi A."/>
            <person name="Mount S.M."/>
            <person name="Moy M."/>
            <person name="Murphy B."/>
            <person name="Murphy L."/>
            <person name="Muzny D.M."/>
            <person name="Nelson D.L."/>
            <person name="Nelson D.R."/>
            <person name="Nelson K.A."/>
            <person name="Nixon K."/>
            <person name="Nusskern D.R."/>
            <person name="Pacleb J.M."/>
            <person name="Palazzolo M."/>
            <person name="Pittman G.S."/>
            <person name="Pan S."/>
            <person name="Pollard J."/>
            <person name="Puri V."/>
            <person name="Reese M.G."/>
            <person name="Reinert K."/>
            <person name="Remington K."/>
            <person name="Saunders R.D.C."/>
            <person name="Scheeler F."/>
            <person name="Shen H."/>
            <person name="Shue B.C."/>
            <person name="Siden-Kiamos I."/>
            <person name="Simpson M."/>
            <person name="Skupski M.P."/>
            <person name="Smith T.J."/>
            <person name="Spier E."/>
            <person name="Spradling A.C."/>
            <person name="Stapleton M."/>
            <person name="Strong R."/>
            <person name="Sun E."/>
            <person name="Svirskas R."/>
            <person name="Tector C."/>
            <person name="Turner R."/>
            <person name="Venter E."/>
            <person name="Wang A.H."/>
            <person name="Wang X."/>
            <person name="Wang Z.-Y."/>
            <person name="Wassarman D.A."/>
            <person name="Weinstock G.M."/>
            <person name="Weissenbach J."/>
            <person name="Williams S.M."/>
            <person name="Woodage T."/>
            <person name="Worley K.C."/>
            <person name="Wu D."/>
            <person name="Yang S."/>
            <person name="Yao Q.A."/>
            <person name="Ye J."/>
            <person name="Yeh R.-F."/>
            <person name="Zaveri J.S."/>
            <person name="Zhan M."/>
            <person name="Zhang G."/>
            <person name="Zhao Q."/>
            <person name="Zheng L."/>
            <person name="Zheng X.H."/>
            <person name="Zhong F.N."/>
            <person name="Zhong W."/>
            <person name="Zhou X."/>
            <person name="Zhu S.C."/>
            <person name="Zhu X."/>
            <person name="Smith H.O."/>
            <person name="Gibbs R.A."/>
            <person name="Myers E.W."/>
            <person name="Rubin G.M."/>
            <person name="Venter J.C."/>
        </authorList>
    </citation>
    <scope>NUCLEOTIDE SEQUENCE [LARGE SCALE GENOMIC DNA]</scope>
    <source>
        <strain evidence="13">Berkeley</strain>
    </source>
</reference>
<reference evidence="13" key="2">
    <citation type="journal article" date="2002" name="Genome Biol.">
        <title>Annotation of the Drosophila melanogaster euchromatic genome: a systematic review.</title>
        <authorList>
            <person name="Misra S."/>
            <person name="Crosby M.A."/>
            <person name="Mungall C.J."/>
            <person name="Matthews B.B."/>
            <person name="Campbell K.S."/>
            <person name="Hradecky P."/>
            <person name="Huang Y."/>
            <person name="Kaminker J.S."/>
            <person name="Millburn G.H."/>
            <person name="Prochnik S.E."/>
            <person name="Smith C.D."/>
            <person name="Tupy J.L."/>
            <person name="Whitfield E.J."/>
            <person name="Bayraktaroglu L."/>
            <person name="Berman B.P."/>
            <person name="Bettencourt B.R."/>
            <person name="Celniker S.E."/>
            <person name="de Grey A.D.N.J."/>
            <person name="Drysdale R.A."/>
            <person name="Harris N.L."/>
            <person name="Richter J."/>
            <person name="Russo S."/>
            <person name="Schroeder A.J."/>
            <person name="Shu S.Q."/>
            <person name="Stapleton M."/>
            <person name="Yamada C."/>
            <person name="Ashburner M."/>
            <person name="Gelbart W.M."/>
            <person name="Rubin G.M."/>
            <person name="Lewis S.E."/>
        </authorList>
    </citation>
    <scope>GENOME REANNOTATION</scope>
    <source>
        <strain evidence="13">Berkeley</strain>
    </source>
</reference>
<reference evidence="9" key="3">
    <citation type="journal article" date="2002" name="Genome Biol.">
        <title>A Drosophila full-length cDNA resource.</title>
        <authorList>
            <person name="Stapleton M."/>
            <person name="Carlson J.W."/>
            <person name="Brokstein P."/>
            <person name="Yu C."/>
            <person name="Champe M."/>
            <person name="George R.A."/>
            <person name="Guarin H."/>
            <person name="Kronmiller B."/>
            <person name="Pacleb J.M."/>
            <person name="Park S."/>
            <person name="Wan K.H."/>
            <person name="Rubin G.M."/>
            <person name="Celniker S.E."/>
        </authorList>
    </citation>
    <scope>NUCLEOTIDE SEQUENCE [LARGE SCALE MRNA] OF 1017-1601</scope>
    <source>
        <strain>Berkeley</strain>
        <tissue evidence="9">Embryo</tissue>
    </source>
</reference>
<reference evidence="10 11" key="4">
    <citation type="submission" date="2009-03" db="EMBL/GenBank/DDBJ databases">
        <authorList>
            <person name="Booth B."/>
            <person name="Carlson J."/>
            <person name="Frise E."/>
            <person name="Kapadia B."/>
            <person name="Park S."/>
            <person name="Sandler J."/>
            <person name="Stapleton M."/>
            <person name="Wan K."/>
            <person name="Yu C."/>
            <person name="Celniker S."/>
        </authorList>
    </citation>
    <scope>NUCLEOTIDE SEQUENCE [LARGE SCALE MRNA] OF 329-1601 (ISOFORM C)</scope>
    <scope>NUCLEOTIDE SEQUENCE [LARGE SCALE MRNA] OF 1123-1601 (ISOFORM G)</scope>
</reference>
<reference evidence="8" key="5">
    <citation type="journal article" date="2018" name="Mol. Psychiatry">
        <title>The Arf6 activator Efa6/PSD3 confers regional specificity and modulates ethanol consumption in Drosophila and humans.</title>
        <authorList>
            <consortium name="IMAGEN Consortium"/>
            <person name="Gonzalez D.A."/>
            <person name="Jia T."/>
            <person name="Pinzon J.H."/>
            <person name="Acevedo S.F."/>
            <person name="Ojelade S.A."/>
            <person name="Xu B."/>
            <person name="Tay N."/>
            <person name="Desrivieres S."/>
            <person name="Hernandez J.L."/>
            <person name="Banaschewski T."/>
            <person name="Buechel C."/>
            <person name="Bokde A.L.W."/>
            <person name="Conrod P.J."/>
            <person name="Flor H."/>
            <person name="Frouin V."/>
            <person name="Gallinat J."/>
            <person name="Garavan H."/>
            <person name="Gowland P.A."/>
            <person name="Heinz A."/>
            <person name="Ittermann B."/>
            <person name="Lathrop M."/>
            <person name="Martinot J.L."/>
            <person name="Paus T."/>
            <person name="Smolka M.N."/>
            <person name="Rodan A.R."/>
            <person name="Schumann G."/>
            <person name="Rothenfluh A."/>
        </authorList>
    </citation>
    <scope>FUNCTION</scope>
    <scope>TISSUE SPECIFICITY</scope>
    <scope>DISRUPTION PHENOTYPE</scope>
</reference>
<reference evidence="8" key="6">
    <citation type="journal article" date="2019" name="Elife">
        <title>Efa6 protects axons and regulates their growth and branching by inhibiting microtubule polymerisation at the cortex.</title>
        <authorList>
            <person name="Qu Y."/>
            <person name="Hahn I."/>
            <person name="Lees M."/>
            <person name="Parkin J."/>
            <person name="Voelzmann A."/>
            <person name="Dorey K."/>
            <person name="Rathbone A."/>
            <person name="Friel C.T."/>
            <person name="Allan V.J."/>
            <person name="Okenve-Ramos P."/>
            <person name="Sanchez-Soriano N."/>
            <person name="Prokop A."/>
        </authorList>
    </citation>
    <scope>FUNCTION</scope>
    <scope>INTERACTION WITH TUBULIN</scope>
    <scope>SUBCELLULAR LOCATION</scope>
    <scope>TISSUE SPECIFICITY</scope>
    <scope>DEVELOPMENTAL STAGE</scope>
    <scope>DISRUPTION PHENOTYPE</scope>
    <scope>MOTIF</scope>
    <scope>MUTAGENESIS OF 233-SER--PRO-236 AND 262-SER--PRO-265</scope>
</reference>
<sequence length="1601" mass="176440">MSEELKVVLRRSEQHSGFGFSLLGTTGPPHVIYDIVENSPAADCGAVEAGDVILKVNGTDVHRYTTKEVLKCLRLSEQLVTLELKRDPKLKARIKEQLANTQSPHYVDIESPNIYDYHSSSTNSSPNHRPNAGGKGAATTPSQTGLRYKSPTHLPSLRQNSSPLLASGSTTTTTTATHTHSHSRNSSASSTKIKVVETSITTSTTNVVGLTSPTGSVGGGVGGEATSPTFRPSRIPQALTKCAVPKPVPVLHSPQNKRPRPSQIPTKAANGNGNGHTAHLPPQSLQHSNSYSGSPVTRQRFADREPEREPEPNSAPPQPAKAPRFEAYMMTGDLILNLSRTPQTSNPLPAQAKKIDSLRDSPSRLVNPRINGALAPRASGESSPTSSSSVDSPTNTSSDSVKREAKLLQKQQQQQQQTYQQQQQRDSINNSYNRKDSLTNDTLLMCEELEPDEEGEYVLEEDNKQQRQRQQQQRYRQQQNQQRYEYYQNEDELEEQEEVEEEREEDQTHYDITNIETYQSGVGRGDDDDSDRQCLVDDDDDDDAYDDEENDAGDEDYSTNSLGSGSAKQRLRALKQRTATRQQQRNRDAVDCAGRSGSGSSSTTVKSEAGGLGLDETSFSVPTSPISLSTPLIDKETANSVPTSPEPSSLVPESSSGAGAGAVVVRRHNGHVVRKCDAAGFRTSKSEDHLQQIQREGIAAVIPIDIDEDVNSSLNTLLDTRQDSEDSQSMATVIVNNSSLASNNNEGEQTDNRSSSSSSNSSDNNNCSSNTGEPATSETATATATIITATSTRTMNCSSKLNYILCKKASDRDRIVWTYNAPLQPHQLAALQRQQQQQEQQFQQQQQQLHQQHLQQQQQLQQQHQQQQQQQQQQQQQQLYGQQSHSNSHSSSISSSPQHSAVGSPASPTSVSSSVMSSSGSKGALGLGSSSNGPMAAVQQQQLREREQGGQVAQPPSGIPGLLSCPGGGCGNNGGGGGIGGGGNNDQSVSEAISNISSPDYQDDDNLLSSRDILGGMVLSDPSDSDSTILVSDAAAHQRQQLKQQLRAQQQQQRERERDRDRDREQSEHKVVIQVRGLDSNSSGGNGTNGRSEEDVVTLTDEPLGTMTVGMRDASPPVSDDGSDVESLHSYHYSPKAVDMPSAIRLAKRLHSLDGFKKSDVSRHLSKNNDFSRAVADEYLKHFTFEKKSLDQALREFLQQFSLSGETQERERVLVHFSKRFLDCNPGTFNSQDAVHTLTCAIMLLNTDLHGQNINRKMSCAEFVDNLADLNDGENFPKDVLKSLYQAIKTKPLEWALDEEAGDLQQQRANNSALGNVGLNPFLDPPELATAVEYKKGYVMRKCCYDSSFKKTPFGKRSWKMFYCTLRDLVLYLHKDEHGFRKSQMSDNLHNAIRIHHALATKANDYTKKQHVFRLQTADQAEYLFQTSDSKELQSWVETINYVCAAISAPPLEGGVGSQKRFQRPLLPSKQSKLMLKEQLDSHEVQLAQLDQELNEHKKGPIPSKGLALQNYKEKESYLQYELRRYRTYVSILSAKMLADQQQLELQAQQPSPASHEEEADTFPVGTTACTPPTPQSINQKDQQKEQQQQQPTNRKEKKKK</sequence>
<organism evidence="13">
    <name type="scientific">Drosophila melanogaster</name>
    <name type="common">Fruit fly</name>
    <dbReference type="NCBI Taxonomy" id="7227"/>
    <lineage>
        <taxon>Eukaryota</taxon>
        <taxon>Metazoa</taxon>
        <taxon>Ecdysozoa</taxon>
        <taxon>Arthropoda</taxon>
        <taxon>Hexapoda</taxon>
        <taxon>Insecta</taxon>
        <taxon>Pterygota</taxon>
        <taxon>Neoptera</taxon>
        <taxon>Endopterygota</taxon>
        <taxon>Diptera</taxon>
        <taxon>Brachycera</taxon>
        <taxon>Muscomorpha</taxon>
        <taxon>Ephydroidea</taxon>
        <taxon>Drosophilidae</taxon>
        <taxon>Drosophila</taxon>
        <taxon>Sophophora</taxon>
    </lineage>
</organism>
<gene>
    <name evidence="7 12" type="primary">Efa6</name>
    <name evidence="12" type="synonym">CG18185</name>
    <name evidence="12" type="synonym">CG6941</name>
    <name evidence="7 12" type="synonym">dPsd</name>
    <name evidence="12" type="ORF">CG31158</name>
</gene>
<comment type="function">
    <text evidence="5 6">Guanine nucleotide exchange factor for Arf6 (PubMed:28607459). Regulates axon growth and branching by inhibiting microtubule polymerisation at the cortex (PubMed:31718774). Together with shot, promotes axonal microtubule bundle integrity (PubMed:31718774). Required for normal ethanol-induced tolerance and preference (PubMed:28607459). Probably by activating Arf6, counteracts ethanol-induced sedation (PubMed:28607459).</text>
</comment>
<comment type="subunit">
    <text evidence="6">Interacts (via MTED motif) with tubulin.</text>
</comment>
<comment type="subcellular location">
    <subcellularLocation>
        <location evidence="6">Cell projection</location>
        <location evidence="6">Axon</location>
    </subcellularLocation>
    <subcellularLocation>
        <location evidence="6">Cytoplasm</location>
    </subcellularLocation>
    <subcellularLocation>
        <location evidence="6">Cell membrane</location>
        <topology evidence="6">Peripheral membrane protein</topology>
    </subcellularLocation>
    <subcellularLocation>
        <location evidence="6">Cytoplasm</location>
        <location evidence="6">Cell cortex</location>
    </subcellularLocation>
</comment>
<comment type="alternative products">
    <event type="alternative splicing"/>
    <isoform>
        <id>E1JIT7-1</id>
        <name evidence="12">H</name>
        <sequence type="displayed"/>
    </isoform>
    <isoform>
        <id>E1JIT7-2</id>
        <name evidence="12">C</name>
        <sequence type="described" ref="VSP_060537 VSP_060539"/>
    </isoform>
    <isoform>
        <id>E1JIT7-3</id>
        <name evidence="12">D</name>
        <sequence type="described" ref="VSP_060537"/>
    </isoform>
    <isoform>
        <id>E1JIT7-4</id>
        <name evidence="12">G</name>
        <sequence type="described" ref="VSP_060537 VSP_060539 VSP_060541"/>
    </isoform>
    <isoform>
        <id>E1JIT7-5</id>
        <name evidence="12">I</name>
        <sequence type="described" ref="VSP_060537 VSP_060540"/>
    </isoform>
</comment>
<comment type="tissue specificity">
    <text evidence="5 6">Expressed in the head (at protein level).</text>
</comment>
<comment type="developmental stage">
    <text evidence="6">Expressed throughout the central nervous system at larval and adult stages.</text>
</comment>
<comment type="disruption phenotype">
    <text evidence="5 6">Viable but male sterile (PubMed:28607459). Results in enhances preference and sensitivity to ethanol (PubMed:28607459). Fails to develop tolerance to repeated ethanol exposures (PubMed:28607459). Increases axon length and axon branching (PubMed:31718774). RNAi-mediated knockdown increases axon length and axon branching (PubMed:31718774). RNAi-mediated knockdown in a subset of lamina neurons results in axonal swellings and disorganized axonal microtubules (PubMed:31718774).</text>
</comment>
<comment type="similarity">
    <text evidence="8">Belongs to the PSD family.</text>
</comment>